<name>MTNN_SALA4</name>
<protein>
    <recommendedName>
        <fullName evidence="1">5'-methylthioadenosine/S-adenosylhomocysteine nucleosidase</fullName>
        <shortName evidence="1">MTA/SAH nucleosidase</shortName>
        <shortName evidence="1">MTAN</shortName>
        <ecNumber evidence="1">3.2.2.9</ecNumber>
    </recommendedName>
    <alternativeName>
        <fullName evidence="1">5'-deoxyadenosine nucleosidase</fullName>
        <shortName evidence="1">DOA nucleosidase</shortName>
        <shortName evidence="1">dAdo nucleosidase</shortName>
    </alternativeName>
    <alternativeName>
        <fullName evidence="1">5'-methylthioadenosine nucleosidase</fullName>
        <shortName evidence="1">MTA nucleosidase</shortName>
    </alternativeName>
    <alternativeName>
        <fullName evidence="1">S-adenosylhomocysteine nucleosidase</fullName>
        <shortName evidence="1">AdoHcy nucleosidase</shortName>
        <shortName evidence="1">SAH nucleosidase</shortName>
        <shortName evidence="1">SRH nucleosidase</shortName>
    </alternativeName>
</protein>
<gene>
    <name evidence="1" type="primary">mtnN</name>
    <name type="ordered locus">SeAg_B0246</name>
</gene>
<feature type="chain" id="PRO_0000359326" description="5'-methylthioadenosine/S-adenosylhomocysteine nucleosidase">
    <location>
        <begin position="1"/>
        <end position="232"/>
    </location>
</feature>
<feature type="active site" description="Proton acceptor" evidence="1">
    <location>
        <position position="12"/>
    </location>
</feature>
<feature type="active site" description="Proton donor" evidence="1">
    <location>
        <position position="197"/>
    </location>
</feature>
<feature type="binding site" evidence="1">
    <location>
        <position position="78"/>
    </location>
    <ligand>
        <name>substrate</name>
    </ligand>
</feature>
<feature type="binding site" evidence="1">
    <location>
        <position position="152"/>
    </location>
    <ligand>
        <name>substrate</name>
    </ligand>
</feature>
<feature type="binding site" evidence="1">
    <location>
        <begin position="173"/>
        <end position="174"/>
    </location>
    <ligand>
        <name>substrate</name>
    </ligand>
</feature>
<accession>B5F8S1</accession>
<evidence type="ECO:0000255" key="1">
    <source>
        <dbReference type="HAMAP-Rule" id="MF_01684"/>
    </source>
</evidence>
<proteinExistence type="inferred from homology"/>
<dbReference type="EC" id="3.2.2.9" evidence="1"/>
<dbReference type="EMBL" id="CP001138">
    <property type="protein sequence ID" value="ACH51811.1"/>
    <property type="molecule type" value="Genomic_DNA"/>
</dbReference>
<dbReference type="RefSeq" id="WP_000689822.1">
    <property type="nucleotide sequence ID" value="NC_011149.1"/>
</dbReference>
<dbReference type="SMR" id="B5F8S1"/>
<dbReference type="KEGG" id="sea:SeAg_B0246"/>
<dbReference type="HOGENOM" id="CLU_031248_2_2_6"/>
<dbReference type="UniPathway" id="UPA00904">
    <property type="reaction ID" value="UER00871"/>
</dbReference>
<dbReference type="Proteomes" id="UP000008819">
    <property type="component" value="Chromosome"/>
</dbReference>
<dbReference type="GO" id="GO:0005829">
    <property type="term" value="C:cytosol"/>
    <property type="evidence" value="ECO:0007669"/>
    <property type="project" value="TreeGrafter"/>
</dbReference>
<dbReference type="GO" id="GO:0008782">
    <property type="term" value="F:adenosylhomocysteine nucleosidase activity"/>
    <property type="evidence" value="ECO:0007669"/>
    <property type="project" value="UniProtKB-UniRule"/>
</dbReference>
<dbReference type="GO" id="GO:0008930">
    <property type="term" value="F:methylthioadenosine nucleosidase activity"/>
    <property type="evidence" value="ECO:0007669"/>
    <property type="project" value="UniProtKB-UniRule"/>
</dbReference>
<dbReference type="GO" id="GO:0019509">
    <property type="term" value="P:L-methionine salvage from methylthioadenosine"/>
    <property type="evidence" value="ECO:0007669"/>
    <property type="project" value="UniProtKB-UniRule"/>
</dbReference>
<dbReference type="GO" id="GO:0019284">
    <property type="term" value="P:L-methionine salvage from S-adenosylmethionine"/>
    <property type="evidence" value="ECO:0007669"/>
    <property type="project" value="TreeGrafter"/>
</dbReference>
<dbReference type="GO" id="GO:0046124">
    <property type="term" value="P:purine deoxyribonucleoside catabolic process"/>
    <property type="evidence" value="ECO:0007669"/>
    <property type="project" value="UniProtKB-UniRule"/>
</dbReference>
<dbReference type="CDD" id="cd09008">
    <property type="entry name" value="MTAN"/>
    <property type="match status" value="1"/>
</dbReference>
<dbReference type="FunFam" id="3.40.50.1580:FF:000001">
    <property type="entry name" value="MTA/SAH nucleosidase family protein"/>
    <property type="match status" value="1"/>
</dbReference>
<dbReference type="Gene3D" id="3.40.50.1580">
    <property type="entry name" value="Nucleoside phosphorylase domain"/>
    <property type="match status" value="1"/>
</dbReference>
<dbReference type="HAMAP" id="MF_01684">
    <property type="entry name" value="Salvage_MtnN"/>
    <property type="match status" value="1"/>
</dbReference>
<dbReference type="InterPro" id="IPR010049">
    <property type="entry name" value="MTA_SAH_Nsdase"/>
</dbReference>
<dbReference type="InterPro" id="IPR000845">
    <property type="entry name" value="Nucleoside_phosphorylase_d"/>
</dbReference>
<dbReference type="InterPro" id="IPR035994">
    <property type="entry name" value="Nucleoside_phosphorylase_sf"/>
</dbReference>
<dbReference type="NCBIfam" id="TIGR01704">
    <property type="entry name" value="MTA_SAH-Nsdase"/>
    <property type="match status" value="1"/>
</dbReference>
<dbReference type="NCBIfam" id="NF004079">
    <property type="entry name" value="PRK05584.1"/>
    <property type="match status" value="1"/>
</dbReference>
<dbReference type="PANTHER" id="PTHR46832">
    <property type="entry name" value="5'-METHYLTHIOADENOSINE/S-ADENOSYLHOMOCYSTEINE NUCLEOSIDASE"/>
    <property type="match status" value="1"/>
</dbReference>
<dbReference type="PANTHER" id="PTHR46832:SF1">
    <property type="entry name" value="5'-METHYLTHIOADENOSINE_S-ADENOSYLHOMOCYSTEINE NUCLEOSIDASE"/>
    <property type="match status" value="1"/>
</dbReference>
<dbReference type="Pfam" id="PF01048">
    <property type="entry name" value="PNP_UDP_1"/>
    <property type="match status" value="1"/>
</dbReference>
<dbReference type="SUPFAM" id="SSF53167">
    <property type="entry name" value="Purine and uridine phosphorylases"/>
    <property type="match status" value="1"/>
</dbReference>
<keyword id="KW-0028">Amino-acid biosynthesis</keyword>
<keyword id="KW-0378">Hydrolase</keyword>
<keyword id="KW-0486">Methionine biosynthesis</keyword>
<reference key="1">
    <citation type="journal article" date="2011" name="J. Bacteriol.">
        <title>Comparative genomics of 28 Salmonella enterica isolates: evidence for CRISPR-mediated adaptive sublineage evolution.</title>
        <authorList>
            <person name="Fricke W.F."/>
            <person name="Mammel M.K."/>
            <person name="McDermott P.F."/>
            <person name="Tartera C."/>
            <person name="White D.G."/>
            <person name="Leclerc J.E."/>
            <person name="Ravel J."/>
            <person name="Cebula T.A."/>
        </authorList>
    </citation>
    <scope>NUCLEOTIDE SEQUENCE [LARGE SCALE GENOMIC DNA]</scope>
    <source>
        <strain>SL483</strain>
    </source>
</reference>
<sequence length="232" mass="24472">MKIGIIGAMEEEVTLLRDKIDNRQTITLGGCEIYTGQLNGTEVALLKSGIGKVAAALGATLLLEHCKPDVIINTGSAGGLASTLKVGDIVVSDEARYHDADVTAFGYEYGQLPGCPAGFKADDKLIAAAESCIRELNLNAVRGLIVSGDAFINGSVGLAKIRHNFPDAVAVEMEATAIAHVCYNFNVPFVVVRAISDVADQQSHLSFDEFLAVAAKQSTLMVETLVQKLAHG</sequence>
<comment type="function">
    <text evidence="1">Catalyzes the irreversible cleavage of the glycosidic bond in both 5'-methylthioadenosine (MTA) and S-adenosylhomocysteine (SAH/AdoHcy) to adenine and the corresponding thioribose, 5'-methylthioribose and S-ribosylhomocysteine, respectively. Also cleaves 5'-deoxyadenosine, a toxic by-product of radical S-adenosylmethionine (SAM) enzymes, into 5-deoxyribose and adenine. Thus, is required for in vivo function of the radical SAM enzymes biotin synthase and lipoic acid synthase, that are inhibited by 5'-deoxyadenosine accumulation.</text>
</comment>
<comment type="catalytic activity">
    <reaction evidence="1">
        <text>S-adenosyl-L-homocysteine + H2O = S-(5-deoxy-D-ribos-5-yl)-L-homocysteine + adenine</text>
        <dbReference type="Rhea" id="RHEA:17805"/>
        <dbReference type="ChEBI" id="CHEBI:15377"/>
        <dbReference type="ChEBI" id="CHEBI:16708"/>
        <dbReference type="ChEBI" id="CHEBI:57856"/>
        <dbReference type="ChEBI" id="CHEBI:58195"/>
        <dbReference type="EC" id="3.2.2.9"/>
    </reaction>
</comment>
<comment type="catalytic activity">
    <reaction evidence="1">
        <text>S-methyl-5'-thioadenosine + H2O = 5-(methylsulfanyl)-D-ribose + adenine</text>
        <dbReference type="Rhea" id="RHEA:13617"/>
        <dbReference type="ChEBI" id="CHEBI:15377"/>
        <dbReference type="ChEBI" id="CHEBI:16708"/>
        <dbReference type="ChEBI" id="CHEBI:17509"/>
        <dbReference type="ChEBI" id="CHEBI:78440"/>
        <dbReference type="EC" id="3.2.2.9"/>
    </reaction>
</comment>
<comment type="catalytic activity">
    <reaction evidence="1">
        <text>5'-deoxyadenosine + H2O = 5-deoxy-D-ribose + adenine</text>
        <dbReference type="Rhea" id="RHEA:29859"/>
        <dbReference type="ChEBI" id="CHEBI:15377"/>
        <dbReference type="ChEBI" id="CHEBI:16708"/>
        <dbReference type="ChEBI" id="CHEBI:17319"/>
        <dbReference type="ChEBI" id="CHEBI:149540"/>
        <dbReference type="EC" id="3.2.2.9"/>
    </reaction>
    <physiologicalReaction direction="left-to-right" evidence="1">
        <dbReference type="Rhea" id="RHEA:29860"/>
    </physiologicalReaction>
</comment>
<comment type="pathway">
    <text evidence="1">Amino-acid biosynthesis; L-methionine biosynthesis via salvage pathway; S-methyl-5-thio-alpha-D-ribose 1-phosphate from S-methyl-5'-thioadenosine (hydrolase route): step 1/2.</text>
</comment>
<comment type="subunit">
    <text evidence="1">Homodimer.</text>
</comment>
<comment type="similarity">
    <text evidence="1">Belongs to the PNP/UDP phosphorylase family. MtnN subfamily.</text>
</comment>
<organism>
    <name type="scientific">Salmonella agona (strain SL483)</name>
    <dbReference type="NCBI Taxonomy" id="454166"/>
    <lineage>
        <taxon>Bacteria</taxon>
        <taxon>Pseudomonadati</taxon>
        <taxon>Pseudomonadota</taxon>
        <taxon>Gammaproteobacteria</taxon>
        <taxon>Enterobacterales</taxon>
        <taxon>Enterobacteriaceae</taxon>
        <taxon>Salmonella</taxon>
    </lineage>
</organism>